<evidence type="ECO:0000255" key="1">
    <source>
        <dbReference type="HAMAP-Rule" id="MF_00671"/>
    </source>
</evidence>
<accession>Q28TS0</accession>
<reference key="1">
    <citation type="submission" date="2006-02" db="EMBL/GenBank/DDBJ databases">
        <title>Complete sequence of chromosome of Jannaschia sp. CCS1.</title>
        <authorList>
            <consortium name="US DOE Joint Genome Institute"/>
            <person name="Copeland A."/>
            <person name="Lucas S."/>
            <person name="Lapidus A."/>
            <person name="Barry K."/>
            <person name="Detter J.C."/>
            <person name="Glavina del Rio T."/>
            <person name="Hammon N."/>
            <person name="Israni S."/>
            <person name="Pitluck S."/>
            <person name="Brettin T."/>
            <person name="Bruce D."/>
            <person name="Han C."/>
            <person name="Tapia R."/>
            <person name="Gilna P."/>
            <person name="Chertkov O."/>
            <person name="Saunders E."/>
            <person name="Schmutz J."/>
            <person name="Larimer F."/>
            <person name="Land M."/>
            <person name="Kyrpides N."/>
            <person name="Lykidis A."/>
            <person name="Moran M.A."/>
            <person name="Belas R."/>
            <person name="Ye W."/>
            <person name="Buchan A."/>
            <person name="Gonzalez J.M."/>
            <person name="Schell M.A."/>
            <person name="Richardson P."/>
        </authorList>
    </citation>
    <scope>NUCLEOTIDE SEQUENCE [LARGE SCALE GENOMIC DNA]</scope>
    <source>
        <strain>CCS1</strain>
    </source>
</reference>
<feature type="signal peptide" evidence="1">
    <location>
        <begin position="1"/>
        <end position="26"/>
    </location>
</feature>
<feature type="chain" id="PRO_0000259054" description="Tol-Pal system protein TolB" evidence="1">
    <location>
        <begin position="27"/>
        <end position="445"/>
    </location>
</feature>
<proteinExistence type="inferred from homology"/>
<sequence length="445" mass="48275">MLNRRNFIRTTSALAASTALPGYAFGQSGPLRLEITEGVIEPLPFALPTFLAVGGAEDAAADVSRVIAADLRGTGLFRQIPPDAYISQITNFGAPVAYPDWQAINAQALITGQVEARADGQLVVRFRLFDVFSQAPLGEGLQFVGPADSWRRMAHTVADQVYSRITGEGGYFDTRVAFIAEEGPKNARLKRLAIMDYDGANVQFLTDSRSIVLAPRFSPQGDRILYTSYESGFPQVYIMDVATVQRRPLEAIPAETMTFSPRFSPSGQSVVFSLVDGSNTDIYSLDLATGTRRQLTQAPSIETAPSFSPDGSQIVFESDRSGNQQIYIMPADGGEARRVSAGTGRYGTPVWSPRGDYIAFTKQENGRFHIGVMRTDGSDERLLTSSFLDEGPTWAPNGRVIMFTRETPGDDGAPAVYSVDISGRNLQRVATPGMASDPAWSPLQS</sequence>
<comment type="function">
    <text evidence="1">Part of the Tol-Pal system, which plays a role in outer membrane invagination during cell division and is important for maintaining outer membrane integrity.</text>
</comment>
<comment type="subunit">
    <text evidence="1">The Tol-Pal system is composed of five core proteins: the inner membrane proteins TolA, TolQ and TolR, the periplasmic protein TolB and the outer membrane protein Pal. They form a network linking the inner and outer membranes and the peptidoglycan layer.</text>
</comment>
<comment type="subcellular location">
    <subcellularLocation>
        <location evidence="1">Periplasm</location>
    </subcellularLocation>
</comment>
<comment type="similarity">
    <text evidence="1">Belongs to the TolB family.</text>
</comment>
<protein>
    <recommendedName>
        <fullName evidence="1">Tol-Pal system protein TolB</fullName>
    </recommendedName>
</protein>
<keyword id="KW-0131">Cell cycle</keyword>
<keyword id="KW-0132">Cell division</keyword>
<keyword id="KW-0574">Periplasm</keyword>
<keyword id="KW-1185">Reference proteome</keyword>
<keyword id="KW-0732">Signal</keyword>
<dbReference type="EMBL" id="CP000264">
    <property type="protein sequence ID" value="ABD53892.1"/>
    <property type="molecule type" value="Genomic_DNA"/>
</dbReference>
<dbReference type="RefSeq" id="WP_011454100.1">
    <property type="nucleotide sequence ID" value="NC_007802.1"/>
</dbReference>
<dbReference type="SMR" id="Q28TS0"/>
<dbReference type="STRING" id="290400.Jann_0975"/>
<dbReference type="DNASU" id="3933419"/>
<dbReference type="KEGG" id="jan:Jann_0975"/>
<dbReference type="eggNOG" id="COG0823">
    <property type="taxonomic scope" value="Bacteria"/>
</dbReference>
<dbReference type="HOGENOM" id="CLU_047123_0_0_5"/>
<dbReference type="OrthoDB" id="9802240at2"/>
<dbReference type="Proteomes" id="UP000008326">
    <property type="component" value="Chromosome"/>
</dbReference>
<dbReference type="GO" id="GO:0042597">
    <property type="term" value="C:periplasmic space"/>
    <property type="evidence" value="ECO:0007669"/>
    <property type="project" value="UniProtKB-SubCell"/>
</dbReference>
<dbReference type="GO" id="GO:0051301">
    <property type="term" value="P:cell division"/>
    <property type="evidence" value="ECO:0007669"/>
    <property type="project" value="UniProtKB-UniRule"/>
</dbReference>
<dbReference type="GO" id="GO:0017038">
    <property type="term" value="P:protein import"/>
    <property type="evidence" value="ECO:0007669"/>
    <property type="project" value="InterPro"/>
</dbReference>
<dbReference type="Gene3D" id="2.120.10.30">
    <property type="entry name" value="TolB, C-terminal domain"/>
    <property type="match status" value="1"/>
</dbReference>
<dbReference type="Gene3D" id="3.40.50.10070">
    <property type="entry name" value="TolB, N-terminal domain"/>
    <property type="match status" value="1"/>
</dbReference>
<dbReference type="HAMAP" id="MF_00671">
    <property type="entry name" value="TolB"/>
    <property type="match status" value="1"/>
</dbReference>
<dbReference type="InterPro" id="IPR011042">
    <property type="entry name" value="6-blade_b-propeller_TolB-like"/>
</dbReference>
<dbReference type="InterPro" id="IPR011659">
    <property type="entry name" value="PD40"/>
</dbReference>
<dbReference type="InterPro" id="IPR006311">
    <property type="entry name" value="TAT_signal"/>
</dbReference>
<dbReference type="InterPro" id="IPR014167">
    <property type="entry name" value="Tol-Pal_TolB"/>
</dbReference>
<dbReference type="InterPro" id="IPR007195">
    <property type="entry name" value="TolB_N"/>
</dbReference>
<dbReference type="NCBIfam" id="TIGR02800">
    <property type="entry name" value="propeller_TolB"/>
    <property type="match status" value="1"/>
</dbReference>
<dbReference type="PANTHER" id="PTHR36842:SF1">
    <property type="entry name" value="PROTEIN TOLB"/>
    <property type="match status" value="1"/>
</dbReference>
<dbReference type="PANTHER" id="PTHR36842">
    <property type="entry name" value="PROTEIN TOLB HOMOLOG"/>
    <property type="match status" value="1"/>
</dbReference>
<dbReference type="Pfam" id="PF07676">
    <property type="entry name" value="PD40"/>
    <property type="match status" value="5"/>
</dbReference>
<dbReference type="Pfam" id="PF04052">
    <property type="entry name" value="TolB_N"/>
    <property type="match status" value="1"/>
</dbReference>
<dbReference type="SUPFAM" id="SSF52964">
    <property type="entry name" value="TolB, N-terminal domain"/>
    <property type="match status" value="1"/>
</dbReference>
<dbReference type="SUPFAM" id="SSF69304">
    <property type="entry name" value="Tricorn protease N-terminal domain"/>
    <property type="match status" value="1"/>
</dbReference>
<dbReference type="PROSITE" id="PS51318">
    <property type="entry name" value="TAT"/>
    <property type="match status" value="1"/>
</dbReference>
<name>TOLB_JANSC</name>
<organism>
    <name type="scientific">Jannaschia sp. (strain CCS1)</name>
    <dbReference type="NCBI Taxonomy" id="290400"/>
    <lineage>
        <taxon>Bacteria</taxon>
        <taxon>Pseudomonadati</taxon>
        <taxon>Pseudomonadota</taxon>
        <taxon>Alphaproteobacteria</taxon>
        <taxon>Rhodobacterales</taxon>
        <taxon>Roseobacteraceae</taxon>
        <taxon>Jannaschia</taxon>
    </lineage>
</organism>
<gene>
    <name evidence="1" type="primary">tolB</name>
    <name type="ordered locus">Jann_0975</name>
</gene>